<keyword id="KW-0963">Cytoplasm</keyword>
<keyword id="KW-0227">DNA damage</keyword>
<keyword id="KW-0234">DNA repair</keyword>
<keyword id="KW-0378">Hydrolase</keyword>
<keyword id="KW-1185">Reference proteome</keyword>
<evidence type="ECO:0000255" key="1">
    <source>
        <dbReference type="HAMAP-Rule" id="MF_00148"/>
    </source>
</evidence>
<gene>
    <name evidence="1" type="primary">ung</name>
    <name type="ordered locus">Exig_2889</name>
</gene>
<proteinExistence type="inferred from homology"/>
<accession>B1YFL0</accession>
<reference key="1">
    <citation type="submission" date="2008-04" db="EMBL/GenBank/DDBJ databases">
        <title>Complete sequence of chromosome of Exiguobacterium sibiricum 255-15.</title>
        <authorList>
            <consortium name="US DOE Joint Genome Institute"/>
            <person name="Copeland A."/>
            <person name="Lucas S."/>
            <person name="Lapidus A."/>
            <person name="Glavina del Rio T."/>
            <person name="Dalin E."/>
            <person name="Tice H."/>
            <person name="Bruce D."/>
            <person name="Goodwin L."/>
            <person name="Pitluck S."/>
            <person name="Kiss H."/>
            <person name="Chertkov O."/>
            <person name="Monk C."/>
            <person name="Brettin T."/>
            <person name="Detter J.C."/>
            <person name="Han C."/>
            <person name="Kuske C.R."/>
            <person name="Schmutz J."/>
            <person name="Larimer F."/>
            <person name="Land M."/>
            <person name="Hauser L."/>
            <person name="Kyrpides N."/>
            <person name="Mikhailova N."/>
            <person name="Vishnivetskaya T."/>
            <person name="Rodrigues D.F."/>
            <person name="Gilichinsky D."/>
            <person name="Tiedje J."/>
            <person name="Richardson P."/>
        </authorList>
    </citation>
    <scope>NUCLEOTIDE SEQUENCE [LARGE SCALE GENOMIC DNA]</scope>
    <source>
        <strain>DSM 17290 / CCUG 55495 / CIP 109462 / JCM 13490 / 255-15</strain>
    </source>
</reference>
<name>UNG_EXIS2</name>
<protein>
    <recommendedName>
        <fullName evidence="1">Uracil-DNA glycosylase</fullName>
        <shortName evidence="1">UDG</shortName>
        <ecNumber evidence="1">3.2.2.27</ecNumber>
    </recommendedName>
</protein>
<comment type="function">
    <text evidence="1">Excises uracil residues from the DNA which can arise as a result of misincorporation of dUMP residues by DNA polymerase or due to deamination of cytosine.</text>
</comment>
<comment type="catalytic activity">
    <reaction evidence="1">
        <text>Hydrolyzes single-stranded DNA or mismatched double-stranded DNA and polynucleotides, releasing free uracil.</text>
        <dbReference type="EC" id="3.2.2.27"/>
    </reaction>
</comment>
<comment type="subcellular location">
    <subcellularLocation>
        <location evidence="1">Cytoplasm</location>
    </subcellularLocation>
</comment>
<comment type="similarity">
    <text evidence="1">Belongs to the uracil-DNA glycosylase (UDG) superfamily. UNG family.</text>
</comment>
<organism>
    <name type="scientific">Exiguobacterium sibiricum (strain DSM 17290 / CCUG 55495 / CIP 109462 / JCM 13490 / 255-15)</name>
    <dbReference type="NCBI Taxonomy" id="262543"/>
    <lineage>
        <taxon>Bacteria</taxon>
        <taxon>Bacillati</taxon>
        <taxon>Bacillota</taxon>
        <taxon>Bacilli</taxon>
        <taxon>Bacillales</taxon>
        <taxon>Bacillales Family XII. Incertae Sedis</taxon>
        <taxon>Exiguobacterium</taxon>
    </lineage>
</organism>
<dbReference type="EC" id="3.2.2.27" evidence="1"/>
<dbReference type="EMBL" id="CP001022">
    <property type="protein sequence ID" value="ACB62335.1"/>
    <property type="molecule type" value="Genomic_DNA"/>
</dbReference>
<dbReference type="RefSeq" id="WP_012371751.1">
    <property type="nucleotide sequence ID" value="NC_010556.1"/>
</dbReference>
<dbReference type="SMR" id="B1YFL0"/>
<dbReference type="STRING" id="262543.Exig_2889"/>
<dbReference type="KEGG" id="esi:Exig_2889"/>
<dbReference type="eggNOG" id="COG0692">
    <property type="taxonomic scope" value="Bacteria"/>
</dbReference>
<dbReference type="HOGENOM" id="CLU_032162_3_1_9"/>
<dbReference type="OrthoDB" id="9804372at2"/>
<dbReference type="Proteomes" id="UP000001681">
    <property type="component" value="Chromosome"/>
</dbReference>
<dbReference type="GO" id="GO:0005737">
    <property type="term" value="C:cytoplasm"/>
    <property type="evidence" value="ECO:0007669"/>
    <property type="project" value="UniProtKB-SubCell"/>
</dbReference>
<dbReference type="GO" id="GO:0004844">
    <property type="term" value="F:uracil DNA N-glycosylase activity"/>
    <property type="evidence" value="ECO:0007669"/>
    <property type="project" value="UniProtKB-UniRule"/>
</dbReference>
<dbReference type="GO" id="GO:0097510">
    <property type="term" value="P:base-excision repair, AP site formation via deaminated base removal"/>
    <property type="evidence" value="ECO:0007669"/>
    <property type="project" value="TreeGrafter"/>
</dbReference>
<dbReference type="CDD" id="cd10027">
    <property type="entry name" value="UDG-F1-like"/>
    <property type="match status" value="1"/>
</dbReference>
<dbReference type="FunFam" id="3.40.470.10:FF:000001">
    <property type="entry name" value="Uracil-DNA glycosylase"/>
    <property type="match status" value="1"/>
</dbReference>
<dbReference type="Gene3D" id="3.40.470.10">
    <property type="entry name" value="Uracil-DNA glycosylase-like domain"/>
    <property type="match status" value="1"/>
</dbReference>
<dbReference type="HAMAP" id="MF_00148">
    <property type="entry name" value="UDG"/>
    <property type="match status" value="1"/>
</dbReference>
<dbReference type="InterPro" id="IPR002043">
    <property type="entry name" value="UDG_fam1"/>
</dbReference>
<dbReference type="InterPro" id="IPR005122">
    <property type="entry name" value="Uracil-DNA_glycosylase-like"/>
</dbReference>
<dbReference type="InterPro" id="IPR036895">
    <property type="entry name" value="Uracil-DNA_glycosylase-like_sf"/>
</dbReference>
<dbReference type="NCBIfam" id="NF003588">
    <property type="entry name" value="PRK05254.1-1"/>
    <property type="match status" value="1"/>
</dbReference>
<dbReference type="NCBIfam" id="NF003589">
    <property type="entry name" value="PRK05254.1-2"/>
    <property type="match status" value="1"/>
</dbReference>
<dbReference type="NCBIfam" id="NF003591">
    <property type="entry name" value="PRK05254.1-4"/>
    <property type="match status" value="1"/>
</dbReference>
<dbReference type="NCBIfam" id="NF003592">
    <property type="entry name" value="PRK05254.1-5"/>
    <property type="match status" value="1"/>
</dbReference>
<dbReference type="NCBIfam" id="TIGR00628">
    <property type="entry name" value="ung"/>
    <property type="match status" value="1"/>
</dbReference>
<dbReference type="PANTHER" id="PTHR11264">
    <property type="entry name" value="URACIL-DNA GLYCOSYLASE"/>
    <property type="match status" value="1"/>
</dbReference>
<dbReference type="PANTHER" id="PTHR11264:SF0">
    <property type="entry name" value="URACIL-DNA GLYCOSYLASE"/>
    <property type="match status" value="1"/>
</dbReference>
<dbReference type="Pfam" id="PF03167">
    <property type="entry name" value="UDG"/>
    <property type="match status" value="1"/>
</dbReference>
<dbReference type="SMART" id="SM00986">
    <property type="entry name" value="UDG"/>
    <property type="match status" value="1"/>
</dbReference>
<dbReference type="SMART" id="SM00987">
    <property type="entry name" value="UreE_C"/>
    <property type="match status" value="1"/>
</dbReference>
<dbReference type="SUPFAM" id="SSF52141">
    <property type="entry name" value="Uracil-DNA glycosylase-like"/>
    <property type="match status" value="1"/>
</dbReference>
<sequence length="219" mass="24775">MHTAWQEILKEEKEKDYFIRLWDFVKTAYRETTVYPPKDRIFHAFDAVAPQDVRCVILGQDPYHGPNQANGLSFSVNDGVAIPPSLRNMYKELMSDLGCPAPTTGNLEAWSNQGVFLLNTSLTVEAGKAGSHAKKGWESFTDRVIEVLGQQEQPIVFILWGNHAKSKKSLIDTNRHLVLESVHPSPLSASRGFFGSRPYSQTNDWLQQQNRTPIDWCIS</sequence>
<feature type="chain" id="PRO_1000096581" description="Uracil-DNA glycosylase">
    <location>
        <begin position="1"/>
        <end position="219"/>
    </location>
</feature>
<feature type="active site" description="Proton acceptor" evidence="1">
    <location>
        <position position="61"/>
    </location>
</feature>